<reference key="1">
    <citation type="journal article" date="2002" name="Nature">
        <title>The genome sequence of Schizosaccharomyces pombe.</title>
        <authorList>
            <person name="Wood V."/>
            <person name="Gwilliam R."/>
            <person name="Rajandream M.A."/>
            <person name="Lyne M.H."/>
            <person name="Lyne R."/>
            <person name="Stewart A."/>
            <person name="Sgouros J.G."/>
            <person name="Peat N."/>
            <person name="Hayles J."/>
            <person name="Baker S.G."/>
            <person name="Basham D."/>
            <person name="Bowman S."/>
            <person name="Brooks K."/>
            <person name="Brown D."/>
            <person name="Brown S."/>
            <person name="Chillingworth T."/>
            <person name="Churcher C.M."/>
            <person name="Collins M."/>
            <person name="Connor R."/>
            <person name="Cronin A."/>
            <person name="Davis P."/>
            <person name="Feltwell T."/>
            <person name="Fraser A."/>
            <person name="Gentles S."/>
            <person name="Goble A."/>
            <person name="Hamlin N."/>
            <person name="Harris D.E."/>
            <person name="Hidalgo J."/>
            <person name="Hodgson G."/>
            <person name="Holroyd S."/>
            <person name="Hornsby T."/>
            <person name="Howarth S."/>
            <person name="Huckle E.J."/>
            <person name="Hunt S."/>
            <person name="Jagels K."/>
            <person name="James K.D."/>
            <person name="Jones L."/>
            <person name="Jones M."/>
            <person name="Leather S."/>
            <person name="McDonald S."/>
            <person name="McLean J."/>
            <person name="Mooney P."/>
            <person name="Moule S."/>
            <person name="Mungall K.L."/>
            <person name="Murphy L.D."/>
            <person name="Niblett D."/>
            <person name="Odell C."/>
            <person name="Oliver K."/>
            <person name="O'Neil S."/>
            <person name="Pearson D."/>
            <person name="Quail M.A."/>
            <person name="Rabbinowitsch E."/>
            <person name="Rutherford K.M."/>
            <person name="Rutter S."/>
            <person name="Saunders D."/>
            <person name="Seeger K."/>
            <person name="Sharp S."/>
            <person name="Skelton J."/>
            <person name="Simmonds M.N."/>
            <person name="Squares R."/>
            <person name="Squares S."/>
            <person name="Stevens K."/>
            <person name="Taylor K."/>
            <person name="Taylor R.G."/>
            <person name="Tivey A."/>
            <person name="Walsh S.V."/>
            <person name="Warren T."/>
            <person name="Whitehead S."/>
            <person name="Woodward J.R."/>
            <person name="Volckaert G."/>
            <person name="Aert R."/>
            <person name="Robben J."/>
            <person name="Grymonprez B."/>
            <person name="Weltjens I."/>
            <person name="Vanstreels E."/>
            <person name="Rieger M."/>
            <person name="Schaefer M."/>
            <person name="Mueller-Auer S."/>
            <person name="Gabel C."/>
            <person name="Fuchs M."/>
            <person name="Duesterhoeft A."/>
            <person name="Fritzc C."/>
            <person name="Holzer E."/>
            <person name="Moestl D."/>
            <person name="Hilbert H."/>
            <person name="Borzym K."/>
            <person name="Langer I."/>
            <person name="Beck A."/>
            <person name="Lehrach H."/>
            <person name="Reinhardt R."/>
            <person name="Pohl T.M."/>
            <person name="Eger P."/>
            <person name="Zimmermann W."/>
            <person name="Wedler H."/>
            <person name="Wambutt R."/>
            <person name="Purnelle B."/>
            <person name="Goffeau A."/>
            <person name="Cadieu E."/>
            <person name="Dreano S."/>
            <person name="Gloux S."/>
            <person name="Lelaure V."/>
            <person name="Mottier S."/>
            <person name="Galibert F."/>
            <person name="Aves S.J."/>
            <person name="Xiang Z."/>
            <person name="Hunt C."/>
            <person name="Moore K."/>
            <person name="Hurst S.M."/>
            <person name="Lucas M."/>
            <person name="Rochet M."/>
            <person name="Gaillardin C."/>
            <person name="Tallada V.A."/>
            <person name="Garzon A."/>
            <person name="Thode G."/>
            <person name="Daga R.R."/>
            <person name="Cruzado L."/>
            <person name="Jimenez J."/>
            <person name="Sanchez M."/>
            <person name="del Rey F."/>
            <person name="Benito J."/>
            <person name="Dominguez A."/>
            <person name="Revuelta J.L."/>
            <person name="Moreno S."/>
            <person name="Armstrong J."/>
            <person name="Forsburg S.L."/>
            <person name="Cerutti L."/>
            <person name="Lowe T."/>
            <person name="McCombie W.R."/>
            <person name="Paulsen I."/>
            <person name="Potashkin J."/>
            <person name="Shpakovski G.V."/>
            <person name="Ussery D."/>
            <person name="Barrell B.G."/>
            <person name="Nurse P."/>
        </authorList>
    </citation>
    <scope>NUCLEOTIDE SEQUENCE [LARGE SCALE GENOMIC DNA]</scope>
    <source>
        <strain>972 / ATCC 24843</strain>
    </source>
</reference>
<evidence type="ECO:0000255" key="1">
    <source>
        <dbReference type="PROSITE-ProRule" id="PRU00538"/>
    </source>
</evidence>
<name>JMJ1_SCHPO</name>
<dbReference type="EMBL" id="CU329670">
    <property type="protein sequence ID" value="CAB11599.1"/>
    <property type="molecule type" value="Genomic_DNA"/>
</dbReference>
<dbReference type="PIR" id="T38382">
    <property type="entry name" value="T38382"/>
</dbReference>
<dbReference type="RefSeq" id="NP_593806.1">
    <property type="nucleotide sequence ID" value="NM_001019235.2"/>
</dbReference>
<dbReference type="BioGRID" id="278563">
    <property type="interactions" value="11"/>
</dbReference>
<dbReference type="FunCoup" id="O13977">
    <property type="interactions" value="305"/>
</dbReference>
<dbReference type="STRING" id="284812.O13977"/>
<dbReference type="PaxDb" id="4896-SPAC25H1.02.1"/>
<dbReference type="EnsemblFungi" id="SPAC25H1.02.1">
    <property type="protein sequence ID" value="SPAC25H1.02.1:pep"/>
    <property type="gene ID" value="SPAC25H1.02"/>
</dbReference>
<dbReference type="GeneID" id="2542086"/>
<dbReference type="KEGG" id="spo:2542086"/>
<dbReference type="PomBase" id="SPAC25H1.02">
    <property type="gene designation" value="jmj1"/>
</dbReference>
<dbReference type="VEuPathDB" id="FungiDB:SPAC25H1.02"/>
<dbReference type="eggNOG" id="KOG2131">
    <property type="taxonomic scope" value="Eukaryota"/>
</dbReference>
<dbReference type="HOGENOM" id="CLU_016785_2_3_1"/>
<dbReference type="InParanoid" id="O13977"/>
<dbReference type="OMA" id="KDMHLFR"/>
<dbReference type="PhylomeDB" id="O13977"/>
<dbReference type="Reactome" id="R-SPO-9629569">
    <property type="pathway name" value="Protein hydroxylation"/>
</dbReference>
<dbReference type="PRO" id="PR:O13977"/>
<dbReference type="Proteomes" id="UP000002485">
    <property type="component" value="Chromosome I"/>
</dbReference>
<dbReference type="GO" id="GO:0000785">
    <property type="term" value="C:chromatin"/>
    <property type="evidence" value="ECO:0000255"/>
    <property type="project" value="PomBase"/>
</dbReference>
<dbReference type="GO" id="GO:0005737">
    <property type="term" value="C:cytoplasm"/>
    <property type="evidence" value="ECO:0000318"/>
    <property type="project" value="GO_Central"/>
</dbReference>
<dbReference type="GO" id="GO:0005829">
    <property type="term" value="C:cytosol"/>
    <property type="evidence" value="ECO:0007669"/>
    <property type="project" value="GOC"/>
</dbReference>
<dbReference type="GO" id="GO:0005634">
    <property type="term" value="C:nucleus"/>
    <property type="evidence" value="ECO:0000318"/>
    <property type="project" value="GO_Central"/>
</dbReference>
<dbReference type="GO" id="GO:0016706">
    <property type="term" value="F:2-oxoglutarate-dependent dioxygenase activity"/>
    <property type="evidence" value="ECO:0000318"/>
    <property type="project" value="GO_Central"/>
</dbReference>
<dbReference type="GO" id="GO:0106156">
    <property type="term" value="F:peptidyl-lysine 4-dioxygenase activity"/>
    <property type="evidence" value="ECO:0000266"/>
    <property type="project" value="PomBase"/>
</dbReference>
<dbReference type="GO" id="GO:0043565">
    <property type="term" value="F:sequence-specific DNA binding"/>
    <property type="evidence" value="ECO:0000318"/>
    <property type="project" value="GO_Central"/>
</dbReference>
<dbReference type="GO" id="GO:0002184">
    <property type="term" value="P:cytoplasmic translational termination"/>
    <property type="evidence" value="ECO:0000266"/>
    <property type="project" value="PomBase"/>
</dbReference>
<dbReference type="GO" id="GO:0045905">
    <property type="term" value="P:positive regulation of translational termination"/>
    <property type="evidence" value="ECO:0000318"/>
    <property type="project" value="GO_Central"/>
</dbReference>
<dbReference type="Gene3D" id="2.60.120.650">
    <property type="entry name" value="Cupin"/>
    <property type="match status" value="1"/>
</dbReference>
<dbReference type="InterPro" id="IPR003347">
    <property type="entry name" value="JmjC_dom"/>
</dbReference>
<dbReference type="InterPro" id="IPR050910">
    <property type="entry name" value="JMJD6_ArgDemeth/LysHydrox"/>
</dbReference>
<dbReference type="PANTHER" id="PTHR12480:SF6">
    <property type="entry name" value="2-OXOGLUTARATE AND IRON-DEPENDENT OXYGENASE JMJD4"/>
    <property type="match status" value="1"/>
</dbReference>
<dbReference type="PANTHER" id="PTHR12480">
    <property type="entry name" value="ARGININE DEMETHYLASE AND LYSYL-HYDROXYLASE JMJD"/>
    <property type="match status" value="1"/>
</dbReference>
<dbReference type="Pfam" id="PF02373">
    <property type="entry name" value="JmjC"/>
    <property type="match status" value="1"/>
</dbReference>
<dbReference type="SMART" id="SM00558">
    <property type="entry name" value="JmjC"/>
    <property type="match status" value="1"/>
</dbReference>
<dbReference type="SUPFAM" id="SSF51197">
    <property type="entry name" value="Clavaminate synthase-like"/>
    <property type="match status" value="1"/>
</dbReference>
<dbReference type="PROSITE" id="PS51184">
    <property type="entry name" value="JMJC"/>
    <property type="match status" value="1"/>
</dbReference>
<proteinExistence type="predicted"/>
<accession>O13977</accession>
<protein>
    <recommendedName>
        <fullName>JmjC domain-containing protein 1</fullName>
    </recommendedName>
    <alternativeName>
        <fullName>Jumonji domain-containing protein 1</fullName>
    </alternativeName>
</protein>
<keyword id="KW-1185">Reference proteome</keyword>
<gene>
    <name type="primary">jmj1</name>
    <name type="ORF">SPAC25H1.02</name>
</gene>
<feature type="chain" id="PRO_0000316594" description="JmjC domain-containing protein 1">
    <location>
        <begin position="1"/>
        <end position="464"/>
    </location>
</feature>
<feature type="domain" description="JmjC" evidence="1">
    <location>
        <begin position="182"/>
        <end position="349"/>
    </location>
</feature>
<sequence length="464" mass="53586">MVYRPTAHEFDDLPKIEFIDSCPYQVFLEQYLKPCVPVLIGPKLTAQWKANTTWITSKGDPNILHSYILPDKPCTSRDNTSGNSLLNDNDIKNFIRSYAERIVNNEDKNVFLDSLLLSPNYEYLEENYGTIPVPLAYCNEKDRYGSQRRETVPLKSALHELRDEQVQLQCRQAPSNQALKSLYAKDMHLFRHLDPADFPYSTPDIFADDWLNAYVIDCESDDFRFAYLGSHLTTTGLHTDVYASHSFSVNLCGVKCWLFIDPKDLQTIASLYDDQQLPSWITKDDLFRGPLVNHRHLIKILFQYPGQTVFVPSGWYHQVLNIGTTLSINHNWCNASCILQMYTALKEQYEVSAESLKDLLEDGIVTKDRFSQVVTEVVEANYGWCWRRFWGMIKHQLKRRDAILHSSEYFSKWPIQPEFLPPLSWEYSILKNILLNDEPGSTFDSGSPPSSIVTIFKSLGDFKE</sequence>
<organism>
    <name type="scientific">Schizosaccharomyces pombe (strain 972 / ATCC 24843)</name>
    <name type="common">Fission yeast</name>
    <dbReference type="NCBI Taxonomy" id="284812"/>
    <lineage>
        <taxon>Eukaryota</taxon>
        <taxon>Fungi</taxon>
        <taxon>Dikarya</taxon>
        <taxon>Ascomycota</taxon>
        <taxon>Taphrinomycotina</taxon>
        <taxon>Schizosaccharomycetes</taxon>
        <taxon>Schizosaccharomycetales</taxon>
        <taxon>Schizosaccharomycetaceae</taxon>
        <taxon>Schizosaccharomyces</taxon>
    </lineage>
</organism>